<comment type="function">
    <text evidence="1">Component of the COP9 signalosome complex (CSN), a complex involved in various cellular and developmental processes (By similarity). The CSN complex is an essential regulator of the ubiquitin (Ubl) conjugation pathway by mediating the deneddylation of the cullin subunits of E3 ligase complexes, leading to modify the Ubl ligase activity (By similarity).</text>
</comment>
<comment type="subunit">
    <text evidence="1">Component of the CSN complex, probably composed of COPS1, COPS2, COPS3, COPS4, COPS5, COPS6, COPS7, COPS8 and COPS9.</text>
</comment>
<comment type="subcellular location">
    <subcellularLocation>
        <location evidence="1">Cytoplasm</location>
    </subcellularLocation>
    <subcellularLocation>
        <location evidence="1">Nucleus</location>
    </subcellularLocation>
</comment>
<comment type="similarity">
    <text evidence="4">Belongs to the CSN3 family.</text>
</comment>
<reference key="1">
    <citation type="journal article" date="2005" name="Genome Biol.">
        <title>Full-length cDNAs from chicken bursal lymphocytes to facilitate gene function analysis.</title>
        <authorList>
            <person name="Caldwell R.B."/>
            <person name="Kierzek A.M."/>
            <person name="Arakawa H."/>
            <person name="Bezzubov Y."/>
            <person name="Zaim J."/>
            <person name="Fiedler P."/>
            <person name="Kutter S."/>
            <person name="Blagodatski A."/>
            <person name="Kostovska D."/>
            <person name="Koter M."/>
            <person name="Plachy J."/>
            <person name="Carninci P."/>
            <person name="Hayashizaki Y."/>
            <person name="Buerstedde J.-M."/>
        </authorList>
    </citation>
    <scope>NUCLEOTIDE SEQUENCE [LARGE SCALE MRNA]</scope>
    <source>
        <strain>CB</strain>
        <tissue>Bursa of Fabricius</tissue>
    </source>
</reference>
<sequence length="423" mass="47962">MASALEQFVNSVRQLSAQGQMTQLCELINKSGELLAKNLSHLDTVLGALDVQEHSLGVLAVLFVKFSMPSIPDFETLFSQVQLFISTCNGEHIRYATDTFAGLCHQLTNALVERKQPLRGISILRQAIDKMQMNTNQLTSIHADLCQLCLLAKCFKPALPYLDVDMMDICKENGAYDAKHFLCYYYYGGMIYTGLKNFERALYFYEQAITTPAMAVSHIMLESYKKYILVSLILLGKVQQLPKYTSQIVGRFIKPLSNAYHELAQVYSTNKPSELRNLVNKHSETFTRDNNMGLVKQCLSSLYKKNIQRLTKTFLTLSLQDMASRVQLSGPQEAEKYVLHMIEDGEIFASINQKDGMVCFHDNPEKYNNPAMLHNIDQEMLKCIELDERLKAMDQEITVNPQFVQKSMGSQEDDSGTKPSSYS</sequence>
<feature type="chain" id="PRO_0000312648" description="COP9 signalosome complex subunit 3">
    <location>
        <begin position="1"/>
        <end position="423"/>
    </location>
</feature>
<feature type="domain" description="PCI" evidence="2">
    <location>
        <begin position="197"/>
        <end position="365"/>
    </location>
</feature>
<feature type="region of interest" description="Disordered" evidence="3">
    <location>
        <begin position="402"/>
        <end position="423"/>
    </location>
</feature>
<gene>
    <name type="primary">COPS3</name>
    <name type="synonym">CSN3</name>
    <name type="ORF">RCJMB04_18l12</name>
</gene>
<dbReference type="EMBL" id="AJ720483">
    <property type="protein sequence ID" value="CAG32142.1"/>
    <property type="molecule type" value="mRNA"/>
</dbReference>
<dbReference type="RefSeq" id="NP_001006163.1">
    <property type="nucleotide sequence ID" value="NM_001006163.2"/>
</dbReference>
<dbReference type="SMR" id="Q5ZJF1"/>
<dbReference type="FunCoup" id="Q5ZJF1">
    <property type="interactions" value="2628"/>
</dbReference>
<dbReference type="STRING" id="9031.ENSGALP00000064004"/>
<dbReference type="PaxDb" id="9031-ENSGALP00000007709"/>
<dbReference type="Ensembl" id="ENSGALT00010052802.1">
    <property type="protein sequence ID" value="ENSGALP00010031708.1"/>
    <property type="gene ID" value="ENSGALG00010021723.1"/>
</dbReference>
<dbReference type="GeneID" id="416504"/>
<dbReference type="KEGG" id="gga:416504"/>
<dbReference type="CTD" id="8533"/>
<dbReference type="VEuPathDB" id="HostDB:geneid_416504"/>
<dbReference type="eggNOG" id="KOG2582">
    <property type="taxonomic scope" value="Eukaryota"/>
</dbReference>
<dbReference type="GeneTree" id="ENSGT00940000153653"/>
<dbReference type="HOGENOM" id="CLU_028825_0_1_1"/>
<dbReference type="InParanoid" id="Q5ZJF1"/>
<dbReference type="OMA" id="NHYHDLV"/>
<dbReference type="OrthoDB" id="29061at2759"/>
<dbReference type="PhylomeDB" id="Q5ZJF1"/>
<dbReference type="TreeFam" id="TF101146"/>
<dbReference type="Reactome" id="R-GGA-5696394">
    <property type="pathway name" value="DNA Damage Recognition in GG-NER"/>
</dbReference>
<dbReference type="Reactome" id="R-GGA-6781823">
    <property type="pathway name" value="Formation of TC-NER Pre-Incision Complex"/>
</dbReference>
<dbReference type="Reactome" id="R-GGA-8856825">
    <property type="pathway name" value="Cargo recognition for clathrin-mediated endocytosis"/>
</dbReference>
<dbReference type="Reactome" id="R-GGA-8951664">
    <property type="pathway name" value="Neddylation"/>
</dbReference>
<dbReference type="PRO" id="PR:Q5ZJF1"/>
<dbReference type="Proteomes" id="UP000000539">
    <property type="component" value="Chromosome 14"/>
</dbReference>
<dbReference type="Bgee" id="ENSGALG00000004834">
    <property type="expression patterns" value="Expressed in muscle tissue and 13 other cell types or tissues"/>
</dbReference>
<dbReference type="GO" id="GO:0008180">
    <property type="term" value="C:COP9 signalosome"/>
    <property type="evidence" value="ECO:0000318"/>
    <property type="project" value="GO_Central"/>
</dbReference>
<dbReference type="GO" id="GO:0005829">
    <property type="term" value="C:cytosol"/>
    <property type="evidence" value="ECO:0007669"/>
    <property type="project" value="Ensembl"/>
</dbReference>
<dbReference type="GO" id="GO:0005654">
    <property type="term" value="C:nucleoplasm"/>
    <property type="evidence" value="ECO:0007669"/>
    <property type="project" value="Ensembl"/>
</dbReference>
<dbReference type="GO" id="GO:0048471">
    <property type="term" value="C:perinuclear region of cytoplasm"/>
    <property type="evidence" value="ECO:0007669"/>
    <property type="project" value="Ensembl"/>
</dbReference>
<dbReference type="GO" id="GO:0000338">
    <property type="term" value="P:protein deneddylation"/>
    <property type="evidence" value="ECO:0007669"/>
    <property type="project" value="Ensembl"/>
</dbReference>
<dbReference type="GO" id="GO:0043516">
    <property type="term" value="P:regulation of DNA damage response, signal transduction by p53 class mediator"/>
    <property type="evidence" value="ECO:0007669"/>
    <property type="project" value="Ensembl"/>
</dbReference>
<dbReference type="GO" id="GO:0006511">
    <property type="term" value="P:ubiquitin-dependent protein catabolic process"/>
    <property type="evidence" value="ECO:0000318"/>
    <property type="project" value="GO_Central"/>
</dbReference>
<dbReference type="FunFam" id="1.10.10.10:FF:000354">
    <property type="entry name" value="COP9 signalosome complex subunit 3"/>
    <property type="match status" value="1"/>
</dbReference>
<dbReference type="FunFam" id="1.25.40.570:FF:000008">
    <property type="entry name" value="COP9 signalosome complex subunit 3"/>
    <property type="match status" value="1"/>
</dbReference>
<dbReference type="Gene3D" id="1.25.40.570">
    <property type="match status" value="1"/>
</dbReference>
<dbReference type="InterPro" id="IPR055089">
    <property type="entry name" value="COP9_N"/>
</dbReference>
<dbReference type="InterPro" id="IPR050756">
    <property type="entry name" value="CSN3"/>
</dbReference>
<dbReference type="InterPro" id="IPR048621">
    <property type="entry name" value="CSN3_C"/>
</dbReference>
<dbReference type="InterPro" id="IPR000717">
    <property type="entry name" value="PCI_dom"/>
</dbReference>
<dbReference type="InterPro" id="IPR036390">
    <property type="entry name" value="WH_DNA-bd_sf"/>
</dbReference>
<dbReference type="PANTHER" id="PTHR10758">
    <property type="entry name" value="26S PROTEASOME NON-ATPASE REGULATORY SUBUNIT 3/COP9 SIGNALOSOME COMPLEX SUBUNIT 3"/>
    <property type="match status" value="1"/>
</dbReference>
<dbReference type="PANTHER" id="PTHR10758:SF1">
    <property type="entry name" value="COP9 SIGNALOSOME COMPLEX SUBUNIT 3"/>
    <property type="match status" value="1"/>
</dbReference>
<dbReference type="Pfam" id="PF22788">
    <property type="entry name" value="COP9_hel_rpt"/>
    <property type="match status" value="1"/>
</dbReference>
<dbReference type="Pfam" id="PF21215">
    <property type="entry name" value="CSN3-like_C"/>
    <property type="match status" value="1"/>
</dbReference>
<dbReference type="Pfam" id="PF01399">
    <property type="entry name" value="PCI"/>
    <property type="match status" value="1"/>
</dbReference>
<dbReference type="SMART" id="SM00088">
    <property type="entry name" value="PINT"/>
    <property type="match status" value="1"/>
</dbReference>
<dbReference type="SUPFAM" id="SSF46785">
    <property type="entry name" value="Winged helix' DNA-binding domain"/>
    <property type="match status" value="1"/>
</dbReference>
<dbReference type="PROSITE" id="PS50250">
    <property type="entry name" value="PCI"/>
    <property type="match status" value="1"/>
</dbReference>
<proteinExistence type="evidence at transcript level"/>
<organism>
    <name type="scientific">Gallus gallus</name>
    <name type="common">Chicken</name>
    <dbReference type="NCBI Taxonomy" id="9031"/>
    <lineage>
        <taxon>Eukaryota</taxon>
        <taxon>Metazoa</taxon>
        <taxon>Chordata</taxon>
        <taxon>Craniata</taxon>
        <taxon>Vertebrata</taxon>
        <taxon>Euteleostomi</taxon>
        <taxon>Archelosauria</taxon>
        <taxon>Archosauria</taxon>
        <taxon>Dinosauria</taxon>
        <taxon>Saurischia</taxon>
        <taxon>Theropoda</taxon>
        <taxon>Coelurosauria</taxon>
        <taxon>Aves</taxon>
        <taxon>Neognathae</taxon>
        <taxon>Galloanserae</taxon>
        <taxon>Galliformes</taxon>
        <taxon>Phasianidae</taxon>
        <taxon>Phasianinae</taxon>
        <taxon>Gallus</taxon>
    </lineage>
</organism>
<keyword id="KW-0963">Cytoplasm</keyword>
<keyword id="KW-0539">Nucleus</keyword>
<keyword id="KW-1185">Reference proteome</keyword>
<keyword id="KW-0736">Signalosome</keyword>
<accession>Q5ZJF1</accession>
<name>CSN3_CHICK</name>
<evidence type="ECO:0000250" key="1">
    <source>
        <dbReference type="UniProtKB" id="Q9UNS2"/>
    </source>
</evidence>
<evidence type="ECO:0000255" key="2">
    <source>
        <dbReference type="PROSITE-ProRule" id="PRU01185"/>
    </source>
</evidence>
<evidence type="ECO:0000256" key="3">
    <source>
        <dbReference type="SAM" id="MobiDB-lite"/>
    </source>
</evidence>
<evidence type="ECO:0000305" key="4"/>
<protein>
    <recommendedName>
        <fullName>COP9 signalosome complex subunit 3</fullName>
        <shortName>Signalosome subunit 3</shortName>
    </recommendedName>
</protein>